<feature type="chain" id="PRO_0000116978" description="Adenosylhomocysteinase">
    <location>
        <begin position="1"/>
        <end position="469"/>
    </location>
</feature>
<feature type="binding site" evidence="1">
    <location>
        <position position="63"/>
    </location>
    <ligand>
        <name>substrate</name>
    </ligand>
</feature>
<feature type="binding site" evidence="1">
    <location>
        <position position="139"/>
    </location>
    <ligand>
        <name>substrate</name>
    </ligand>
</feature>
<feature type="binding site" evidence="1">
    <location>
        <position position="164"/>
    </location>
    <ligand>
        <name>substrate</name>
    </ligand>
</feature>
<feature type="binding site" evidence="1">
    <location>
        <begin position="165"/>
        <end position="167"/>
    </location>
    <ligand>
        <name>NAD(+)</name>
        <dbReference type="ChEBI" id="CHEBI:57540"/>
    </ligand>
</feature>
<feature type="binding site" evidence="1">
    <location>
        <position position="194"/>
    </location>
    <ligand>
        <name>substrate</name>
    </ligand>
</feature>
<feature type="binding site" evidence="1">
    <location>
        <position position="198"/>
    </location>
    <ligand>
        <name>substrate</name>
    </ligand>
</feature>
<feature type="binding site" evidence="1">
    <location>
        <position position="199"/>
    </location>
    <ligand>
        <name>NAD(+)</name>
        <dbReference type="ChEBI" id="CHEBI:57540"/>
    </ligand>
</feature>
<feature type="binding site" evidence="1">
    <location>
        <begin position="228"/>
        <end position="233"/>
    </location>
    <ligand>
        <name>NAD(+)</name>
        <dbReference type="ChEBI" id="CHEBI:57540"/>
    </ligand>
</feature>
<feature type="binding site" evidence="1">
    <location>
        <position position="251"/>
    </location>
    <ligand>
        <name>NAD(+)</name>
        <dbReference type="ChEBI" id="CHEBI:57540"/>
    </ligand>
</feature>
<feature type="binding site" evidence="1">
    <location>
        <position position="300"/>
    </location>
    <ligand>
        <name>NAD(+)</name>
        <dbReference type="ChEBI" id="CHEBI:57540"/>
    </ligand>
</feature>
<feature type="binding site" evidence="1">
    <location>
        <begin position="321"/>
        <end position="323"/>
    </location>
    <ligand>
        <name>NAD(+)</name>
        <dbReference type="ChEBI" id="CHEBI:57540"/>
    </ligand>
</feature>
<feature type="binding site" evidence="1">
    <location>
        <position position="375"/>
    </location>
    <ligand>
        <name>NAD(+)</name>
        <dbReference type="ChEBI" id="CHEBI:57540"/>
    </ligand>
</feature>
<sequence>MSAVITPAEFNDYKVADISLAAWGRRETIIAESEMPALMGLRRKYAAEQPLKGAKILGCIHMTIQTAVLIETLVALGAEVRWSSCNIFSTQDQAAAAIAAAGIAVYAWKGETEEEYEWCIEQTILKDGQPWDANMILDDGGDLTEIIHKKYPAMLDKIHGVTEETTTGVHRLLDMLAKGELKIPAINVNDSVTKSKNDNKYGCRHSLNDAIKRGTDHLLSGKQALVIGYGDVGKGSAQSLRQEGMIVKVTEVDPICAMQACMDGFELVSPFIDGENDGTEASIDKALLGKIDLIVTTTGNVNVCDSNMLKALKKRAVVCNIGHFDNEIDTAFMRKNWAWEEVKPQVHKIHRTGAGAFDAQNDDYLILLAEGRLVNLGNATGHPSRIMDGSFANQVLAQIFLFDQKYADLAPAKKAERLTVEVLPKKLDEEVALEMVRGFGGVVTKLTKTQADYIGVTVEGPFKPDAYRY</sequence>
<proteinExistence type="inferred from homology"/>
<evidence type="ECO:0000255" key="1">
    <source>
        <dbReference type="HAMAP-Rule" id="MF_00563"/>
    </source>
</evidence>
<keyword id="KW-0963">Cytoplasm</keyword>
<keyword id="KW-0378">Hydrolase</keyword>
<keyword id="KW-0520">NAD</keyword>
<keyword id="KW-0554">One-carbon metabolism</keyword>
<keyword id="KW-1185">Reference proteome</keyword>
<organism>
    <name type="scientific">Pseudomonas syringae pv. tomato (strain ATCC BAA-871 / DC3000)</name>
    <dbReference type="NCBI Taxonomy" id="223283"/>
    <lineage>
        <taxon>Bacteria</taxon>
        <taxon>Pseudomonadati</taxon>
        <taxon>Pseudomonadota</taxon>
        <taxon>Gammaproteobacteria</taxon>
        <taxon>Pseudomonadales</taxon>
        <taxon>Pseudomonadaceae</taxon>
        <taxon>Pseudomonas</taxon>
    </lineage>
</organism>
<dbReference type="EC" id="3.13.2.1" evidence="1"/>
<dbReference type="EMBL" id="AE016853">
    <property type="protein sequence ID" value="AAO58495.1"/>
    <property type="molecule type" value="Genomic_DNA"/>
</dbReference>
<dbReference type="RefSeq" id="NP_794800.1">
    <property type="nucleotide sequence ID" value="NC_004578.1"/>
</dbReference>
<dbReference type="RefSeq" id="WP_005765398.1">
    <property type="nucleotide sequence ID" value="NC_004578.1"/>
</dbReference>
<dbReference type="SMR" id="Q87V73"/>
<dbReference type="STRING" id="223283.PSPTO_5068"/>
<dbReference type="GeneID" id="1186753"/>
<dbReference type="KEGG" id="pst:PSPTO_5068"/>
<dbReference type="PATRIC" id="fig|223283.9.peg.5190"/>
<dbReference type="eggNOG" id="COG0499">
    <property type="taxonomic scope" value="Bacteria"/>
</dbReference>
<dbReference type="HOGENOM" id="CLU_025194_2_1_6"/>
<dbReference type="OrthoDB" id="9802717at2"/>
<dbReference type="PhylomeDB" id="Q87V73"/>
<dbReference type="UniPathway" id="UPA00314">
    <property type="reaction ID" value="UER00076"/>
</dbReference>
<dbReference type="Proteomes" id="UP000002515">
    <property type="component" value="Chromosome"/>
</dbReference>
<dbReference type="GO" id="GO:0005829">
    <property type="term" value="C:cytosol"/>
    <property type="evidence" value="ECO:0007669"/>
    <property type="project" value="TreeGrafter"/>
</dbReference>
<dbReference type="GO" id="GO:0004013">
    <property type="term" value="F:adenosylhomocysteinase activity"/>
    <property type="evidence" value="ECO:0007669"/>
    <property type="project" value="UniProtKB-UniRule"/>
</dbReference>
<dbReference type="GO" id="GO:0071269">
    <property type="term" value="P:L-homocysteine biosynthetic process"/>
    <property type="evidence" value="ECO:0007669"/>
    <property type="project" value="UniProtKB-UniRule"/>
</dbReference>
<dbReference type="GO" id="GO:0006730">
    <property type="term" value="P:one-carbon metabolic process"/>
    <property type="evidence" value="ECO:0007669"/>
    <property type="project" value="UniProtKB-KW"/>
</dbReference>
<dbReference type="GO" id="GO:0033353">
    <property type="term" value="P:S-adenosylmethionine cycle"/>
    <property type="evidence" value="ECO:0007669"/>
    <property type="project" value="TreeGrafter"/>
</dbReference>
<dbReference type="CDD" id="cd00401">
    <property type="entry name" value="SAHH"/>
    <property type="match status" value="1"/>
</dbReference>
<dbReference type="FunFam" id="3.40.50.1480:FF:000006">
    <property type="entry name" value="Adenosylhomocysteinase"/>
    <property type="match status" value="1"/>
</dbReference>
<dbReference type="FunFam" id="3.40.50.1480:FF:000007">
    <property type="entry name" value="Adenosylhomocysteinase"/>
    <property type="match status" value="1"/>
</dbReference>
<dbReference type="FunFam" id="3.40.50.720:FF:000155">
    <property type="entry name" value="Adenosylhomocysteinase"/>
    <property type="match status" value="1"/>
</dbReference>
<dbReference type="Gene3D" id="3.40.50.1480">
    <property type="entry name" value="Adenosylhomocysteinase-like"/>
    <property type="match status" value="3"/>
</dbReference>
<dbReference type="Gene3D" id="3.40.50.720">
    <property type="entry name" value="NAD(P)-binding Rossmann-like Domain"/>
    <property type="match status" value="1"/>
</dbReference>
<dbReference type="HAMAP" id="MF_00563">
    <property type="entry name" value="AdoHcyase"/>
    <property type="match status" value="1"/>
</dbReference>
<dbReference type="InterPro" id="IPR042172">
    <property type="entry name" value="Adenosylhomocyst_ase-like_sf"/>
</dbReference>
<dbReference type="InterPro" id="IPR000043">
    <property type="entry name" value="Adenosylhomocysteinase-like"/>
</dbReference>
<dbReference type="InterPro" id="IPR015878">
    <property type="entry name" value="Ado_hCys_hydrolase_NAD-bd"/>
</dbReference>
<dbReference type="InterPro" id="IPR036291">
    <property type="entry name" value="NAD(P)-bd_dom_sf"/>
</dbReference>
<dbReference type="InterPro" id="IPR020082">
    <property type="entry name" value="S-Ado-L-homoCys_hydrolase_CS"/>
</dbReference>
<dbReference type="NCBIfam" id="TIGR00936">
    <property type="entry name" value="ahcY"/>
    <property type="match status" value="1"/>
</dbReference>
<dbReference type="NCBIfam" id="NF004005">
    <property type="entry name" value="PRK05476.2-3"/>
    <property type="match status" value="1"/>
</dbReference>
<dbReference type="PANTHER" id="PTHR23420">
    <property type="entry name" value="ADENOSYLHOMOCYSTEINASE"/>
    <property type="match status" value="1"/>
</dbReference>
<dbReference type="PANTHER" id="PTHR23420:SF0">
    <property type="entry name" value="ADENOSYLHOMOCYSTEINASE"/>
    <property type="match status" value="1"/>
</dbReference>
<dbReference type="Pfam" id="PF05221">
    <property type="entry name" value="AdoHcyase"/>
    <property type="match status" value="1"/>
</dbReference>
<dbReference type="Pfam" id="PF00670">
    <property type="entry name" value="AdoHcyase_NAD"/>
    <property type="match status" value="1"/>
</dbReference>
<dbReference type="PIRSF" id="PIRSF001109">
    <property type="entry name" value="Ad_hcy_hydrolase"/>
    <property type="match status" value="1"/>
</dbReference>
<dbReference type="SMART" id="SM00996">
    <property type="entry name" value="AdoHcyase"/>
    <property type="match status" value="1"/>
</dbReference>
<dbReference type="SMART" id="SM00997">
    <property type="entry name" value="AdoHcyase_NAD"/>
    <property type="match status" value="1"/>
</dbReference>
<dbReference type="SUPFAM" id="SSF52283">
    <property type="entry name" value="Formate/glycerate dehydrogenase catalytic domain-like"/>
    <property type="match status" value="1"/>
</dbReference>
<dbReference type="SUPFAM" id="SSF51735">
    <property type="entry name" value="NAD(P)-binding Rossmann-fold domains"/>
    <property type="match status" value="1"/>
</dbReference>
<dbReference type="PROSITE" id="PS00738">
    <property type="entry name" value="ADOHCYASE_1"/>
    <property type="match status" value="1"/>
</dbReference>
<dbReference type="PROSITE" id="PS00739">
    <property type="entry name" value="ADOHCYASE_2"/>
    <property type="match status" value="1"/>
</dbReference>
<reference key="1">
    <citation type="journal article" date="2003" name="Proc. Natl. Acad. Sci. U.S.A.">
        <title>The complete genome sequence of the Arabidopsis and tomato pathogen Pseudomonas syringae pv. tomato DC3000.</title>
        <authorList>
            <person name="Buell C.R."/>
            <person name="Joardar V."/>
            <person name="Lindeberg M."/>
            <person name="Selengut J."/>
            <person name="Paulsen I.T."/>
            <person name="Gwinn M.L."/>
            <person name="Dodson R.J."/>
            <person name="DeBoy R.T."/>
            <person name="Durkin A.S."/>
            <person name="Kolonay J.F."/>
            <person name="Madupu R."/>
            <person name="Daugherty S.C."/>
            <person name="Brinkac L.M."/>
            <person name="Beanan M.J."/>
            <person name="Haft D.H."/>
            <person name="Nelson W.C."/>
            <person name="Davidsen T.M."/>
            <person name="Zafar N."/>
            <person name="Zhou L."/>
            <person name="Liu J."/>
            <person name="Yuan Q."/>
            <person name="Khouri H.M."/>
            <person name="Fedorova N.B."/>
            <person name="Tran B."/>
            <person name="Russell D."/>
            <person name="Berry K.J."/>
            <person name="Utterback T.R."/>
            <person name="Van Aken S.E."/>
            <person name="Feldblyum T.V."/>
            <person name="D'Ascenzo M."/>
            <person name="Deng W.-L."/>
            <person name="Ramos A.R."/>
            <person name="Alfano J.R."/>
            <person name="Cartinhour S."/>
            <person name="Chatterjee A.K."/>
            <person name="Delaney T.P."/>
            <person name="Lazarowitz S.G."/>
            <person name="Martin G.B."/>
            <person name="Schneider D.J."/>
            <person name="Tang X."/>
            <person name="Bender C.L."/>
            <person name="White O."/>
            <person name="Fraser C.M."/>
            <person name="Collmer A."/>
        </authorList>
    </citation>
    <scope>NUCLEOTIDE SEQUENCE [LARGE SCALE GENOMIC DNA]</scope>
    <source>
        <strain>ATCC BAA-871 / DC3000</strain>
    </source>
</reference>
<protein>
    <recommendedName>
        <fullName evidence="1">Adenosylhomocysteinase</fullName>
        <ecNumber evidence="1">3.13.2.1</ecNumber>
    </recommendedName>
    <alternativeName>
        <fullName evidence="1">S-adenosyl-L-homocysteine hydrolase</fullName>
        <shortName evidence="1">AdoHcyase</shortName>
    </alternativeName>
</protein>
<accession>Q87V73</accession>
<name>SAHH_PSESM</name>
<gene>
    <name evidence="1" type="primary">ahcY</name>
    <name type="ordered locus">PSPTO_5068</name>
</gene>
<comment type="function">
    <text evidence="1">May play a key role in the regulation of the intracellular concentration of adenosylhomocysteine.</text>
</comment>
<comment type="catalytic activity">
    <reaction evidence="1">
        <text>S-adenosyl-L-homocysteine + H2O = L-homocysteine + adenosine</text>
        <dbReference type="Rhea" id="RHEA:21708"/>
        <dbReference type="ChEBI" id="CHEBI:15377"/>
        <dbReference type="ChEBI" id="CHEBI:16335"/>
        <dbReference type="ChEBI" id="CHEBI:57856"/>
        <dbReference type="ChEBI" id="CHEBI:58199"/>
        <dbReference type="EC" id="3.13.2.1"/>
    </reaction>
</comment>
<comment type="cofactor">
    <cofactor evidence="1">
        <name>NAD(+)</name>
        <dbReference type="ChEBI" id="CHEBI:57540"/>
    </cofactor>
    <text evidence="1">Binds 1 NAD(+) per subunit.</text>
</comment>
<comment type="pathway">
    <text evidence="1">Amino-acid biosynthesis; L-homocysteine biosynthesis; L-homocysteine from S-adenosyl-L-homocysteine: step 1/1.</text>
</comment>
<comment type="subcellular location">
    <subcellularLocation>
        <location evidence="1">Cytoplasm</location>
    </subcellularLocation>
</comment>
<comment type="similarity">
    <text evidence="1">Belongs to the adenosylhomocysteinase family.</text>
</comment>